<organismHost>
    <name type="scientific">Ornithodoros</name>
    <name type="common">relapsing fever ticks</name>
    <dbReference type="NCBI Taxonomy" id="6937"/>
</organismHost>
<organismHost>
    <name type="scientific">Phacochoerus aethiopicus</name>
    <name type="common">Warthog</name>
    <dbReference type="NCBI Taxonomy" id="85517"/>
</organismHost>
<organismHost>
    <name type="scientific">Phacochoerus africanus</name>
    <name type="common">Warthog</name>
    <dbReference type="NCBI Taxonomy" id="41426"/>
</organismHost>
<organismHost>
    <name type="scientific">Potamochoerus larvatus</name>
    <name type="common">Bushpig</name>
    <dbReference type="NCBI Taxonomy" id="273792"/>
</organismHost>
<organismHost>
    <name type="scientific">Sus scrofa</name>
    <name type="common">Pig</name>
    <dbReference type="NCBI Taxonomy" id="9823"/>
</organismHost>
<evidence type="ECO:0000250" key="1">
    <source>
        <dbReference type="UniProtKB" id="Q89443"/>
    </source>
</evidence>
<evidence type="ECO:0000255" key="2"/>
<evidence type="ECO:0000255" key="3">
    <source>
        <dbReference type="PROSITE-ProRule" id="PRU00541"/>
    </source>
</evidence>
<evidence type="ECO:0000255" key="4">
    <source>
        <dbReference type="PROSITE-ProRule" id="PRU00542"/>
    </source>
</evidence>
<evidence type="ECO:0000305" key="5"/>
<keyword id="KW-0067">ATP-binding</keyword>
<keyword id="KW-0347">Helicase</keyword>
<keyword id="KW-1043">Host membrane</keyword>
<keyword id="KW-0378">Hydrolase</keyword>
<keyword id="KW-0472">Membrane</keyword>
<keyword id="KW-0547">Nucleotide-binding</keyword>
<keyword id="KW-0812">Transmembrane</keyword>
<keyword id="KW-1133">Transmembrane helix</keyword>
<keyword id="KW-0946">Virion</keyword>
<organism>
    <name type="scientific">African swine fever virus (isolate Pig/Kenya/KEN-50/1950)</name>
    <name type="common">ASFV</name>
    <dbReference type="NCBI Taxonomy" id="561445"/>
    <lineage>
        <taxon>Viruses</taxon>
        <taxon>Varidnaviria</taxon>
        <taxon>Bamfordvirae</taxon>
        <taxon>Nucleocytoviricota</taxon>
        <taxon>Pokkesviricetes</taxon>
        <taxon>Asfuvirales</taxon>
        <taxon>Asfarviridae</taxon>
        <taxon>Asfivirus</taxon>
        <taxon>African swine fever virus</taxon>
    </lineage>
</organism>
<accession>P0C9A4</accession>
<protein>
    <recommendedName>
        <fullName>Putative RNA Helicase B962L</fullName>
        <ecNumber>3.6.4.13</ecNumber>
    </recommendedName>
</protein>
<comment type="catalytic activity">
    <reaction>
        <text>ATP + H2O = ADP + phosphate + H(+)</text>
        <dbReference type="Rhea" id="RHEA:13065"/>
        <dbReference type="ChEBI" id="CHEBI:15377"/>
        <dbReference type="ChEBI" id="CHEBI:15378"/>
        <dbReference type="ChEBI" id="CHEBI:30616"/>
        <dbReference type="ChEBI" id="CHEBI:43474"/>
        <dbReference type="ChEBI" id="CHEBI:456216"/>
        <dbReference type="EC" id="3.6.4.13"/>
    </reaction>
</comment>
<comment type="subcellular location">
    <subcellularLocation>
        <location evidence="5">Host membrane</location>
        <topology evidence="5">Single-pass membrane protein</topology>
    </subcellularLocation>
    <subcellularLocation>
        <location evidence="1">Virion</location>
    </subcellularLocation>
</comment>
<comment type="induction">
    <text evidence="5">Expressed in the late phase of the viral replicative cycle.</text>
</comment>
<comment type="similarity">
    <text evidence="5">Belongs to the DEAD box helicase family. DEAH subfamily.</text>
</comment>
<dbReference type="EC" id="3.6.4.13"/>
<dbReference type="EMBL" id="AY261360">
    <property type="status" value="NOT_ANNOTATED_CDS"/>
    <property type="molecule type" value="Genomic_DNA"/>
</dbReference>
<dbReference type="SMR" id="P0C9A4"/>
<dbReference type="Proteomes" id="UP000000861">
    <property type="component" value="Segment"/>
</dbReference>
<dbReference type="GO" id="GO:0033644">
    <property type="term" value="C:host cell membrane"/>
    <property type="evidence" value="ECO:0007669"/>
    <property type="project" value="UniProtKB-SubCell"/>
</dbReference>
<dbReference type="GO" id="GO:0016020">
    <property type="term" value="C:membrane"/>
    <property type="evidence" value="ECO:0007669"/>
    <property type="project" value="UniProtKB-KW"/>
</dbReference>
<dbReference type="GO" id="GO:0044423">
    <property type="term" value="C:virion component"/>
    <property type="evidence" value="ECO:0007669"/>
    <property type="project" value="UniProtKB-KW"/>
</dbReference>
<dbReference type="GO" id="GO:0005524">
    <property type="term" value="F:ATP binding"/>
    <property type="evidence" value="ECO:0007669"/>
    <property type="project" value="UniProtKB-KW"/>
</dbReference>
<dbReference type="GO" id="GO:0016887">
    <property type="term" value="F:ATP hydrolysis activity"/>
    <property type="evidence" value="ECO:0007669"/>
    <property type="project" value="RHEA"/>
</dbReference>
<dbReference type="GO" id="GO:0003723">
    <property type="term" value="F:RNA binding"/>
    <property type="evidence" value="ECO:0007669"/>
    <property type="project" value="TreeGrafter"/>
</dbReference>
<dbReference type="GO" id="GO:0003724">
    <property type="term" value="F:RNA helicase activity"/>
    <property type="evidence" value="ECO:0007669"/>
    <property type="project" value="UniProtKB-EC"/>
</dbReference>
<dbReference type="CDD" id="cd17917">
    <property type="entry name" value="DEXHc_RHA-like"/>
    <property type="match status" value="1"/>
</dbReference>
<dbReference type="Gene3D" id="3.40.50.300">
    <property type="entry name" value="P-loop containing nucleotide triphosphate hydrolases"/>
    <property type="match status" value="2"/>
</dbReference>
<dbReference type="Gene3D" id="3.40.50.150">
    <property type="entry name" value="Vaccinia Virus protein VP39"/>
    <property type="match status" value="1"/>
</dbReference>
<dbReference type="InterPro" id="IPR011545">
    <property type="entry name" value="DEAD/DEAH_box_helicase_dom"/>
</dbReference>
<dbReference type="InterPro" id="IPR002464">
    <property type="entry name" value="DNA/RNA_helicase_DEAH_CS"/>
</dbReference>
<dbReference type="InterPro" id="IPR014001">
    <property type="entry name" value="Helicase_ATP-bd"/>
</dbReference>
<dbReference type="InterPro" id="IPR001650">
    <property type="entry name" value="Helicase_C-like"/>
</dbReference>
<dbReference type="InterPro" id="IPR027417">
    <property type="entry name" value="P-loop_NTPase"/>
</dbReference>
<dbReference type="InterPro" id="IPR029063">
    <property type="entry name" value="SAM-dependent_MTases_sf"/>
</dbReference>
<dbReference type="PANTHER" id="PTHR18934">
    <property type="entry name" value="ATP-DEPENDENT RNA HELICASE"/>
    <property type="match status" value="1"/>
</dbReference>
<dbReference type="PANTHER" id="PTHR18934:SF91">
    <property type="entry name" value="PRE-MRNA-SPLICING FACTOR ATP-DEPENDENT RNA HELICASE PRP16"/>
    <property type="match status" value="1"/>
</dbReference>
<dbReference type="Pfam" id="PF00270">
    <property type="entry name" value="DEAD"/>
    <property type="match status" value="1"/>
</dbReference>
<dbReference type="SMART" id="SM00487">
    <property type="entry name" value="DEXDc"/>
    <property type="match status" value="1"/>
</dbReference>
<dbReference type="SMART" id="SM00490">
    <property type="entry name" value="HELICc"/>
    <property type="match status" value="1"/>
</dbReference>
<dbReference type="SUPFAM" id="SSF52540">
    <property type="entry name" value="P-loop containing nucleoside triphosphate hydrolases"/>
    <property type="match status" value="1"/>
</dbReference>
<dbReference type="SUPFAM" id="SSF53335">
    <property type="entry name" value="S-adenosyl-L-methionine-dependent methyltransferases"/>
    <property type="match status" value="1"/>
</dbReference>
<dbReference type="PROSITE" id="PS00690">
    <property type="entry name" value="DEAH_ATP_HELICASE"/>
    <property type="match status" value="1"/>
</dbReference>
<dbReference type="PROSITE" id="PS51192">
    <property type="entry name" value="HELICASE_ATP_BIND_1"/>
    <property type="match status" value="1"/>
</dbReference>
<dbReference type="PROSITE" id="PS51194">
    <property type="entry name" value="HELICASE_CTER"/>
    <property type="match status" value="1"/>
</dbReference>
<proteinExistence type="inferred from homology"/>
<gene>
    <name type="ordered locus">Ken-084</name>
</gene>
<feature type="chain" id="PRO_0000373106" description="Putative RNA Helicase B962L">
    <location>
        <begin position="1"/>
        <end position="963"/>
    </location>
</feature>
<feature type="transmembrane region" description="Helical" evidence="2">
    <location>
        <begin position="521"/>
        <end position="541"/>
    </location>
</feature>
<feature type="domain" description="Helicase ATP-binding" evidence="3">
    <location>
        <begin position="43"/>
        <end position="229"/>
    </location>
</feature>
<feature type="domain" description="Helicase C-terminal" evidence="4">
    <location>
        <begin position="253"/>
        <end position="459"/>
    </location>
</feature>
<feature type="short sequence motif" description="DEAH box">
    <location>
        <begin position="167"/>
        <end position="170"/>
    </location>
</feature>
<feature type="binding site" evidence="3">
    <location>
        <begin position="56"/>
        <end position="63"/>
    </location>
    <ligand>
        <name>ATP</name>
        <dbReference type="ChEBI" id="CHEBI:30616"/>
    </ligand>
</feature>
<name>H962L_ASFK5</name>
<reference key="1">
    <citation type="submission" date="2003-03" db="EMBL/GenBank/DDBJ databases">
        <title>African swine fever virus genomes.</title>
        <authorList>
            <person name="Kutish G.F."/>
            <person name="Rock D.L."/>
        </authorList>
    </citation>
    <scope>NUCLEOTIDE SEQUENCE [LARGE SCALE GENOMIC DNA]</scope>
</reference>
<sequence>MGKPTLLEPGHLYNVPAEHKNDIPIHYIITWIKQRLPEFGGSIPTSLADRVLIIKSRTGSGKSTALPVHVFRILRNENTHSFQKYLGRSVICTQPRVLTAVTLAKDIGASTHYPDMILGQTVGYQTKPLTEKPNRGLIYATAGVLLAQLHTMTDDEIASRYAFMIIDEAHERALGIDLMLMYIKSMLERMLQRGSIGALRIPFVILTSATIDTYKYSTYFGIGKENIILVEGRQFGVETHWPLYNTNNYIKTACETALTIHKENIHDRPTEADILIFMPGMGEIRFLSMLLSHANMDLAKEKLPLMLILPIDSEAIAQENEAYLGLKAEIKDLWVKNPLTAKVEKPLRRVIVSTVVAETGLTIETLKYVIDPGWNRSVETYYPEWAGGLITRPAAQSRIEQRKGRVGRVFPGHFYPLYTKHVFEQIPAQQYPEIITEGPGAIFLNIVVETIKKNKEGVFKVQEIDMLDPPPTDALASALERAIVGGLLTRGEKGLQLTQLGDIASRFSFLSIEEARMCFSGYFWQAAISDIATILAVVSVVDKKLTNLLDSKQRNGAMLAEAVLAGIPPFLQNMDNAYSNIHLLLADDLLEGLFIFEGFQHAIIYFINNKVNNLAKHLREWCEKKMLKYSAMVQILARREDILNELAVVGLNPFHQWQNRLASANAETFLKRVCTLKQCFYEAYRLNCFCYDEQRLLYTGRNGIHFSYQDTVIKNPSCIVTPKMMLSPVSKQYMEWRLEPSFVSVLDGFVNVDINFLLPRQEIPNILGGGVEDEEEEPPLPIQAFLHKYVKTNFHFSGKSFKELKMKPHQTIKFPETTLINIIPDIPKNVVQTYLEISVCHQYSFKRLIYCETFYTDMDDVQQENSVELIGLPMAAHHLTMHDFNKLYQLLKPDGFLIVYDFHKSQEAFWLHSLQDALGHHTIRRDMDFHTISEWETIFKECGFTPMFNKQPSEHELFIVFKK</sequence>